<gene>
    <name type="primary">hoxL</name>
    <name type="ordered locus">OCA5_pHCG300630</name>
</gene>
<name>MBHL_AFIC5</name>
<reference key="1">
    <citation type="journal article" date="1997" name="J. Bacteriol.">
        <title>Purification and molecular characterization of the H2 uptake membrane-bound NiFe-hydrogenase from the carboxidotrophic bacterium Oligotropha carboxidovorans.</title>
        <authorList>
            <person name="Santiago B."/>
            <person name="Meyer O."/>
        </authorList>
    </citation>
    <scope>NUCLEOTIDE SEQUENCE [GENOMIC DNA]</scope>
    <scope>PROTEIN SEQUENCE OF 2-28</scope>
    <source>
        <strain>ATCC 49405 / DSM 1227 / KCTC 32145 / OM5</strain>
    </source>
</reference>
<reference key="2">
    <citation type="journal article" date="2003" name="Gene">
        <title>Complete nucleotide sequence of the circular megaplasmid pHCG3 of Oligotropha carboxidovorans: function in the chemolithoautotrophic utilization of CO, H(2) and CO(2).</title>
        <authorList>
            <person name="Fuhrmann S."/>
            <person name="Ferner M."/>
            <person name="Jeffke T."/>
            <person name="Henne A."/>
            <person name="Gottschalk G."/>
            <person name="Meyer O."/>
        </authorList>
    </citation>
    <scope>NUCLEOTIDE SEQUENCE [LARGE SCALE GENOMIC DNA]</scope>
    <source>
        <strain>ATCC 49405 / DSM 1227 / KCTC 32145 / OM5</strain>
    </source>
</reference>
<reference key="3">
    <citation type="journal article" date="2011" name="J. Bacteriol.">
        <title>Complete genome sequences of the chemolithoautotrophic Oligotropha carboxidovorans strains OM4 and OM5.</title>
        <authorList>
            <person name="Volland S."/>
            <person name="Rachinger M."/>
            <person name="Strittmatter A."/>
            <person name="Daniel R."/>
            <person name="Gottschalk G."/>
            <person name="Meyer O."/>
        </authorList>
    </citation>
    <scope>NUCLEOTIDE SEQUENCE [LARGE SCALE GENOMIC DNA]</scope>
    <source>
        <strain>ATCC 49405 / DSM 1227 / KCTC 32145 / OM5</strain>
    </source>
</reference>
<organism>
    <name type="scientific">Afipia carboxidovorans (strain ATCC 49405 / DSM 1227 / KCTC 32145 / OM5)</name>
    <name type="common">Oligotropha carboxidovorans</name>
    <dbReference type="NCBI Taxonomy" id="504832"/>
    <lineage>
        <taxon>Bacteria</taxon>
        <taxon>Pseudomonadati</taxon>
        <taxon>Pseudomonadota</taxon>
        <taxon>Alphaproteobacteria</taxon>
        <taxon>Hyphomicrobiales</taxon>
        <taxon>Nitrobacteraceae</taxon>
        <taxon>Afipia</taxon>
    </lineage>
</organism>
<accession>O33406</accession>
<accession>F8C127</accession>
<accession>Q6LB92</accession>
<proteinExistence type="evidence at protein level"/>
<feature type="initiator methionine" description="Removed" evidence="3">
    <location>
        <position position="1"/>
    </location>
</feature>
<feature type="chain" id="PRO_0000199714" description="Uptake hydrogenase large subunit">
    <location>
        <begin position="2"/>
        <end position="604"/>
    </location>
</feature>
<feature type="binding site" evidence="2">
    <location>
        <position position="76"/>
    </location>
    <ligand>
        <name>Ni(2+)</name>
        <dbReference type="ChEBI" id="CHEBI:49786"/>
    </ligand>
</feature>
<feature type="binding site" evidence="2">
    <location>
        <position position="79"/>
    </location>
    <ligand>
        <name>Ni(2+)</name>
        <dbReference type="ChEBI" id="CHEBI:49786"/>
    </ligand>
</feature>
<feature type="binding site" evidence="2">
    <location>
        <position position="583"/>
    </location>
    <ligand>
        <name>Ni(2+)</name>
        <dbReference type="ChEBI" id="CHEBI:49786"/>
    </ligand>
</feature>
<feature type="binding site" evidence="2">
    <location>
        <position position="586"/>
    </location>
    <ligand>
        <name>Ni(2+)</name>
        <dbReference type="ChEBI" id="CHEBI:49786"/>
    </ligand>
</feature>
<keyword id="KW-1003">Cell membrane</keyword>
<keyword id="KW-0903">Direct protein sequencing</keyword>
<keyword id="KW-0472">Membrane</keyword>
<keyword id="KW-0479">Metal-binding</keyword>
<keyword id="KW-0533">Nickel</keyword>
<keyword id="KW-0560">Oxidoreductase</keyword>
<keyword id="KW-0614">Plasmid</keyword>
<keyword id="KW-1185">Reference proteome</keyword>
<dbReference type="EC" id="1.12.99.6"/>
<dbReference type="EMBL" id="CP002827">
    <property type="protein sequence ID" value="AEI08137.1"/>
    <property type="molecule type" value="Genomic_DNA"/>
</dbReference>
<dbReference type="RefSeq" id="WP_013913761.1">
    <property type="nucleotide sequence ID" value="NC_015689.1"/>
</dbReference>
<dbReference type="SMR" id="O33406"/>
<dbReference type="KEGG" id="ocg:OCA5_pHCG300630"/>
<dbReference type="PATRIC" id="fig|504832.7.peg.3638"/>
<dbReference type="HOGENOM" id="CLU_030087_0_0_5"/>
<dbReference type="OrthoDB" id="9761717at2"/>
<dbReference type="Proteomes" id="UP000007730">
    <property type="component" value="Plasmid pHCG3"/>
</dbReference>
<dbReference type="GO" id="GO:0005886">
    <property type="term" value="C:plasma membrane"/>
    <property type="evidence" value="ECO:0007669"/>
    <property type="project" value="UniProtKB-SubCell"/>
</dbReference>
<dbReference type="GO" id="GO:0008901">
    <property type="term" value="F:ferredoxin hydrogenase activity"/>
    <property type="evidence" value="ECO:0007669"/>
    <property type="project" value="InterPro"/>
</dbReference>
<dbReference type="GO" id="GO:0033748">
    <property type="term" value="F:hydrogenase (acceptor) activity"/>
    <property type="evidence" value="ECO:0007669"/>
    <property type="project" value="UniProtKB-EC"/>
</dbReference>
<dbReference type="GO" id="GO:0016151">
    <property type="term" value="F:nickel cation binding"/>
    <property type="evidence" value="ECO:0007669"/>
    <property type="project" value="InterPro"/>
</dbReference>
<dbReference type="FunFam" id="1.10.645.10:FF:000002">
    <property type="entry name" value="Hydrogenase 2 large subunit"/>
    <property type="match status" value="1"/>
</dbReference>
<dbReference type="Gene3D" id="1.10.645.10">
    <property type="entry name" value="Cytochrome-c3 Hydrogenase, chain B"/>
    <property type="match status" value="1"/>
</dbReference>
<dbReference type="InterPro" id="IPR001501">
    <property type="entry name" value="Ni-dep_hyd_lsu"/>
</dbReference>
<dbReference type="InterPro" id="IPR018194">
    <property type="entry name" value="Ni-dep_hyd_lsu_Ni_BS"/>
</dbReference>
<dbReference type="InterPro" id="IPR029014">
    <property type="entry name" value="NiFe-Hase_large"/>
</dbReference>
<dbReference type="InterPro" id="IPR050867">
    <property type="entry name" value="NiFe/NiFeSe_hydrgnase_LSU"/>
</dbReference>
<dbReference type="PANTHER" id="PTHR42958">
    <property type="entry name" value="HYDROGENASE-2 LARGE CHAIN"/>
    <property type="match status" value="1"/>
</dbReference>
<dbReference type="PANTHER" id="PTHR42958:SF2">
    <property type="entry name" value="UPTAKE HYDROGENASE LARGE SUBUNIT"/>
    <property type="match status" value="1"/>
</dbReference>
<dbReference type="Pfam" id="PF00374">
    <property type="entry name" value="NiFeSe_Hases"/>
    <property type="match status" value="1"/>
</dbReference>
<dbReference type="SUPFAM" id="SSF56762">
    <property type="entry name" value="HydB/Nqo4-like"/>
    <property type="match status" value="1"/>
</dbReference>
<dbReference type="PROSITE" id="PS00507">
    <property type="entry name" value="NI_HGENASE_L_1"/>
    <property type="match status" value="1"/>
</dbReference>
<dbReference type="PROSITE" id="PS00508">
    <property type="entry name" value="NI_HGENASE_L_2"/>
    <property type="match status" value="1"/>
</dbReference>
<sequence length="604" mass="67144">MSVIQTPNGYKLDNSGRRVVVDPVTRIEGHMRCEVNVDSNNVIRNAVSTGTMWRGLEVILKGRDPRDAWAFVERICGVCTGCHALASVRAVENALDIRIPPNAHLIREIMAKVLQWHDHVVHFYHLHALDWVNPVNALKADPKATSELQQLVGPNHPMSSPGYFRDIQNRLKRFVESGELGIFKNGYWDNPAYKLSPEADLMATAHYLEALDIQKEIVKIHTIFGGKNPHPNFMVGGVPCAINMDGDLAAGAPLNMERLNFVRARIEEAYEFSKNVYIPDVIAIATFYKGWLYGGGLSATNVMDYGDYAKVNYDKSTDQLKGGAILNGNWNEVFPVDAADPEQIQEFVAHSWYKYPDEAKGLHPWDGVTEHNYALGPNTKGTRTDIKQLDEAAKYSWIKSPRWRGHAVEVGPLSRYILNYAQGNQYVIEQVDSSLAAFNKLAGTNLTPKQALPSTIGRTLARALEAHYCAAMMLDDWKELIGNIKAGDSSTANVEKWDPSTWPKEAKGYGLVAAPRGANGHWIRIKDGKIANYQCIVPTTWNGSPRDPAGNIGAFEASLMNTPMERPEEPVEILRTLHSFDPCLACSTHVMSEDGENLAKVTVR</sequence>
<evidence type="ECO:0000250" key="1"/>
<evidence type="ECO:0000255" key="2"/>
<evidence type="ECO:0000269" key="3">
    <source>
    </source>
</evidence>
<evidence type="ECO:0000305" key="4"/>
<comment type="function">
    <text evidence="1">This enzyme recycles the H(2) produced by nitrogenase to increase the production of ATP and to protect nitrogenase against inhibition or damage by O(2) under carbon- or phosphate-limited conditions.</text>
</comment>
<comment type="catalytic activity">
    <reaction>
        <text>H2 + A = AH2</text>
        <dbReference type="Rhea" id="RHEA:12116"/>
        <dbReference type="ChEBI" id="CHEBI:13193"/>
        <dbReference type="ChEBI" id="CHEBI:17499"/>
        <dbReference type="ChEBI" id="CHEBI:18276"/>
        <dbReference type="EC" id="1.12.99.6"/>
    </reaction>
</comment>
<comment type="cofactor">
    <cofactor evidence="1">
        <name>Ni(2+)</name>
        <dbReference type="ChEBI" id="CHEBI:49786"/>
    </cofactor>
    <text evidence="1">Binds 1 nickel ion per subunit.</text>
</comment>
<comment type="subunit">
    <text>Heterodimer of a large and a small subunit.</text>
</comment>
<comment type="subcellular location">
    <subcellularLocation>
        <location>Cell membrane</location>
        <topology>Peripheral membrane protein</topology>
    </subcellularLocation>
</comment>
<comment type="similarity">
    <text evidence="4">Belongs to the [NiFe]/[NiFeSe] hydrogenase large subunit family.</text>
</comment>
<geneLocation type="plasmid">
    <name>megaplasmid pHCG3</name>
</geneLocation>
<protein>
    <recommendedName>
        <fullName>Uptake hydrogenase large subunit</fullName>
        <ecNumber>1.12.99.6</ecNumber>
    </recommendedName>
    <alternativeName>
        <fullName>Hydrogenlyase</fullName>
    </alternativeName>
    <alternativeName>
        <fullName>Membrane-bound hydrogenase large subunit</fullName>
    </alternativeName>
</protein>